<accession>Q4P447</accession>
<accession>A0A0D1C9M4</accession>
<gene>
    <name evidence="1" type="primary">TSF1</name>
    <name type="ORF">UMAG_05116</name>
</gene>
<proteinExistence type="inferred from homology"/>
<reference key="1">
    <citation type="journal article" date="2006" name="Nature">
        <title>Insights from the genome of the biotrophic fungal plant pathogen Ustilago maydis.</title>
        <authorList>
            <person name="Kaemper J."/>
            <person name="Kahmann R."/>
            <person name="Boelker M."/>
            <person name="Ma L.-J."/>
            <person name="Brefort T."/>
            <person name="Saville B.J."/>
            <person name="Banuett F."/>
            <person name="Kronstad J.W."/>
            <person name="Gold S.E."/>
            <person name="Mueller O."/>
            <person name="Perlin M.H."/>
            <person name="Woesten H.A.B."/>
            <person name="de Vries R."/>
            <person name="Ruiz-Herrera J."/>
            <person name="Reynaga-Pena C.G."/>
            <person name="Snetselaar K."/>
            <person name="McCann M."/>
            <person name="Perez-Martin J."/>
            <person name="Feldbruegge M."/>
            <person name="Basse C.W."/>
            <person name="Steinberg G."/>
            <person name="Ibeas J.I."/>
            <person name="Holloman W."/>
            <person name="Guzman P."/>
            <person name="Farman M.L."/>
            <person name="Stajich J.E."/>
            <person name="Sentandreu R."/>
            <person name="Gonzalez-Prieto J.M."/>
            <person name="Kennell J.C."/>
            <person name="Molina L."/>
            <person name="Schirawski J."/>
            <person name="Mendoza-Mendoza A."/>
            <person name="Greilinger D."/>
            <person name="Muench K."/>
            <person name="Roessel N."/>
            <person name="Scherer M."/>
            <person name="Vranes M."/>
            <person name="Ladendorf O."/>
            <person name="Vincon V."/>
            <person name="Fuchs U."/>
            <person name="Sandrock B."/>
            <person name="Meng S."/>
            <person name="Ho E.C.H."/>
            <person name="Cahill M.J."/>
            <person name="Boyce K.J."/>
            <person name="Klose J."/>
            <person name="Klosterman S.J."/>
            <person name="Deelstra H.J."/>
            <person name="Ortiz-Castellanos L."/>
            <person name="Li W."/>
            <person name="Sanchez-Alonso P."/>
            <person name="Schreier P.H."/>
            <person name="Haeuser-Hahn I."/>
            <person name="Vaupel M."/>
            <person name="Koopmann E."/>
            <person name="Friedrich G."/>
            <person name="Voss H."/>
            <person name="Schlueter T."/>
            <person name="Margolis J."/>
            <person name="Platt D."/>
            <person name="Swimmer C."/>
            <person name="Gnirke A."/>
            <person name="Chen F."/>
            <person name="Vysotskaia V."/>
            <person name="Mannhaupt G."/>
            <person name="Gueldener U."/>
            <person name="Muensterkoetter M."/>
            <person name="Haase D."/>
            <person name="Oesterheld M."/>
            <person name="Mewes H.-W."/>
            <person name="Mauceli E.W."/>
            <person name="DeCaprio D."/>
            <person name="Wade C.M."/>
            <person name="Butler J."/>
            <person name="Young S.K."/>
            <person name="Jaffe D.B."/>
            <person name="Calvo S.E."/>
            <person name="Nusbaum C."/>
            <person name="Galagan J.E."/>
            <person name="Birren B.W."/>
        </authorList>
    </citation>
    <scope>NUCLEOTIDE SEQUENCE [LARGE SCALE GENOMIC DNA]</scope>
    <source>
        <strain>DSM 14603 / FGSC 9021 / UM521</strain>
    </source>
</reference>
<reference key="2">
    <citation type="submission" date="2014-09" db="EMBL/GenBank/DDBJ databases">
        <authorList>
            <person name="Gueldener U."/>
            <person name="Muensterkoetter M."/>
            <person name="Walter M.C."/>
            <person name="Mannhaupt G."/>
            <person name="Kahmann R."/>
        </authorList>
    </citation>
    <scope>GENOME REANNOTATION</scope>
    <source>
        <strain>DSM 14603 / FGSC 9021 / UM521</strain>
    </source>
</reference>
<comment type="function">
    <text evidence="1">Associates with the EF-Tu.GDP complex and induces the exchange of GDP to GTP. It remains bound to the aminoacyl-tRNA.EF-Tu.GTP complex up to the GTP hydrolysis stage on the ribosome.</text>
</comment>
<comment type="subcellular location">
    <subcellularLocation>
        <location evidence="1">Mitochondrion</location>
    </subcellularLocation>
</comment>
<comment type="similarity">
    <text evidence="1">Belongs to the EF-Ts family.</text>
</comment>
<protein>
    <recommendedName>
        <fullName evidence="1">Elongation factor Ts, mitochondrial</fullName>
        <shortName evidence="1">EF-Ts</shortName>
        <shortName evidence="1">EF-TsMt</shortName>
    </recommendedName>
</protein>
<dbReference type="EMBL" id="CM003143">
    <property type="protein sequence ID" value="KIS70042.1"/>
    <property type="molecule type" value="Genomic_DNA"/>
</dbReference>
<dbReference type="RefSeq" id="XP_011388185.1">
    <property type="nucleotide sequence ID" value="XM_011389883.1"/>
</dbReference>
<dbReference type="STRING" id="237631.Q4P447"/>
<dbReference type="EnsemblFungi" id="KIS70042">
    <property type="protein sequence ID" value="KIS70042"/>
    <property type="gene ID" value="UMAG_05116"/>
</dbReference>
<dbReference type="GeneID" id="23565095"/>
<dbReference type="KEGG" id="uma:UMAG_05116"/>
<dbReference type="VEuPathDB" id="FungiDB:UMAG_05116"/>
<dbReference type="eggNOG" id="KOG1071">
    <property type="taxonomic scope" value="Eukaryota"/>
</dbReference>
<dbReference type="InParanoid" id="Q4P447"/>
<dbReference type="OrthoDB" id="277235at2759"/>
<dbReference type="Proteomes" id="UP000000561">
    <property type="component" value="Chromosome 4"/>
</dbReference>
<dbReference type="GO" id="GO:0005739">
    <property type="term" value="C:mitochondrion"/>
    <property type="evidence" value="ECO:0007669"/>
    <property type="project" value="UniProtKB-SubCell"/>
</dbReference>
<dbReference type="GO" id="GO:0003746">
    <property type="term" value="F:translation elongation factor activity"/>
    <property type="evidence" value="ECO:0000318"/>
    <property type="project" value="GO_Central"/>
</dbReference>
<dbReference type="GO" id="GO:0070125">
    <property type="term" value="P:mitochondrial translational elongation"/>
    <property type="evidence" value="ECO:0000318"/>
    <property type="project" value="GO_Central"/>
</dbReference>
<dbReference type="Gene3D" id="1.10.8.10">
    <property type="entry name" value="DNA helicase RuvA subunit, C-terminal domain"/>
    <property type="match status" value="1"/>
</dbReference>
<dbReference type="Gene3D" id="3.30.479.20">
    <property type="entry name" value="Elongation factor Ts, dimerisation domain"/>
    <property type="match status" value="2"/>
</dbReference>
<dbReference type="HAMAP" id="MF_00050">
    <property type="entry name" value="EF_Ts"/>
    <property type="match status" value="1"/>
</dbReference>
<dbReference type="InterPro" id="IPR036402">
    <property type="entry name" value="EF-Ts_dimer_sf"/>
</dbReference>
<dbReference type="InterPro" id="IPR001816">
    <property type="entry name" value="Transl_elong_EFTs/EF1B"/>
</dbReference>
<dbReference type="InterPro" id="IPR014039">
    <property type="entry name" value="Transl_elong_EFTs/EF1B_dimer"/>
</dbReference>
<dbReference type="InterPro" id="IPR018101">
    <property type="entry name" value="Transl_elong_Ts_CS"/>
</dbReference>
<dbReference type="PANTHER" id="PTHR11741">
    <property type="entry name" value="ELONGATION FACTOR TS"/>
    <property type="match status" value="1"/>
</dbReference>
<dbReference type="PANTHER" id="PTHR11741:SF0">
    <property type="entry name" value="ELONGATION FACTOR TS, MITOCHONDRIAL"/>
    <property type="match status" value="1"/>
</dbReference>
<dbReference type="Pfam" id="PF00889">
    <property type="entry name" value="EF_TS"/>
    <property type="match status" value="1"/>
</dbReference>
<dbReference type="SUPFAM" id="SSF54713">
    <property type="entry name" value="Elongation factor Ts (EF-Ts), dimerisation domain"/>
    <property type="match status" value="2"/>
</dbReference>
<dbReference type="PROSITE" id="PS01127">
    <property type="entry name" value="EF_TS_2"/>
    <property type="match status" value="1"/>
</dbReference>
<keyword id="KW-0251">Elongation factor</keyword>
<keyword id="KW-0496">Mitochondrion</keyword>
<keyword id="KW-0648">Protein biosynthesis</keyword>
<keyword id="KW-1185">Reference proteome</keyword>
<keyword id="KW-0809">Transit peptide</keyword>
<name>EFTS_MYCMD</name>
<sequence>MSGSRSALSVVRLAACAKPCTLGSTSSVLTRPFSHSAQLCSPAKPSIKAIGELRKLVPGTSMLKAKEALLASRPASSPDTDSIALALEWLEADRKKSGAKKADKVASRTAREGVVAVSILSDGLPSSIEMQGELKDEAKRAGIGATSAAAGAIVEINCETDFVAKNEVFAQLVKDVVHTVALFPGLSAQSGAKRGLVEVPVDQLLAFPLLPSSREATGTSVSAKTVGSAIIDVVSRLGEKISIARAAAIVAPSVPSPDATRRSESGTARGGSIVELASAFAHGGSAGFAAAKDVSNPGYVLTSGKVASLVMTRFASDKLPDALQAGSIQSNIRALTRSLARQVAGLETNCIDSAATCPVDGQVSSALYKQPFMMLLPAAAPSLESNAQPVRQVLSTWASHNNLDSNGNNVVEVVDMHRWELGETIAPPDDAGPGFADEVRKAAGLA</sequence>
<organism>
    <name type="scientific">Mycosarcoma maydis</name>
    <name type="common">Corn smut fungus</name>
    <name type="synonym">Ustilago maydis</name>
    <dbReference type="NCBI Taxonomy" id="5270"/>
    <lineage>
        <taxon>Eukaryota</taxon>
        <taxon>Fungi</taxon>
        <taxon>Dikarya</taxon>
        <taxon>Basidiomycota</taxon>
        <taxon>Ustilaginomycotina</taxon>
        <taxon>Ustilaginomycetes</taxon>
        <taxon>Ustilaginales</taxon>
        <taxon>Ustilaginaceae</taxon>
        <taxon>Mycosarcoma</taxon>
    </lineage>
</organism>
<feature type="transit peptide" description="Mitochondrion" evidence="1">
    <location>
        <begin position="1"/>
        <end position="33"/>
    </location>
</feature>
<feature type="chain" id="PRO_0000402350" description="Elongation factor Ts, mitochondrial">
    <location>
        <begin position="34"/>
        <end position="446"/>
    </location>
</feature>
<evidence type="ECO:0000255" key="1">
    <source>
        <dbReference type="HAMAP-Rule" id="MF_03135"/>
    </source>
</evidence>